<accession>P71018</accession>
<accession>O34561</accession>
<name>PLSX_BACSU</name>
<protein>
    <recommendedName>
        <fullName evidence="1">Phosphate acyltransferase</fullName>
        <ecNumber evidence="1">2.3.1.274</ecNumber>
    </recommendedName>
    <alternativeName>
        <fullName evidence="1">Acyl-ACP phosphotransacylase</fullName>
    </alternativeName>
    <alternativeName>
        <fullName evidence="1">Acyl-[acyl-carrier-protein]--phosphate acyltransferase</fullName>
    </alternativeName>
    <alternativeName>
        <fullName evidence="1">Phosphate-acyl-ACP acyltransferase</fullName>
    </alternativeName>
</protein>
<comment type="function">
    <text evidence="1 2 3 4">Catalyzes the reversible formation of acyl-phosphate (acyl-PO(4)) from acyl-[acyl-carrier-protein] (acyl-ACP). This enzyme utilizes acyl-ACP as fatty acyl donor, but not acyl-CoA.</text>
</comment>
<comment type="catalytic activity">
    <reaction evidence="1">
        <text>a fatty acyl-[ACP] + phosphate = an acyl phosphate + holo-[ACP]</text>
        <dbReference type="Rhea" id="RHEA:42292"/>
        <dbReference type="Rhea" id="RHEA-COMP:9685"/>
        <dbReference type="Rhea" id="RHEA-COMP:14125"/>
        <dbReference type="ChEBI" id="CHEBI:43474"/>
        <dbReference type="ChEBI" id="CHEBI:59918"/>
        <dbReference type="ChEBI" id="CHEBI:64479"/>
        <dbReference type="ChEBI" id="CHEBI:138651"/>
        <dbReference type="EC" id="2.3.1.274"/>
    </reaction>
</comment>
<comment type="pathway">
    <text evidence="1">Lipid metabolism; phospholipid metabolism.</text>
</comment>
<comment type="subunit">
    <text evidence="1 5">Homodimer (By similarity). Probably interacts with PlsY.</text>
</comment>
<comment type="subcellular location">
    <subcellularLocation>
        <location>Cytoplasm</location>
    </subcellularLocation>
    <text evidence="6">Associated with the membrane possibly through PlsY.</text>
</comment>
<comment type="similarity">
    <text evidence="1">Belongs to the PlsX family.</text>
</comment>
<organism>
    <name type="scientific">Bacillus subtilis (strain 168)</name>
    <dbReference type="NCBI Taxonomy" id="224308"/>
    <lineage>
        <taxon>Bacteria</taxon>
        <taxon>Bacillati</taxon>
        <taxon>Bacillota</taxon>
        <taxon>Bacilli</taxon>
        <taxon>Bacillales</taxon>
        <taxon>Bacillaceae</taxon>
        <taxon>Bacillus</taxon>
    </lineage>
</organism>
<dbReference type="EC" id="2.3.1.274" evidence="1"/>
<dbReference type="EMBL" id="Y13937">
    <property type="protein sequence ID" value="CAA74248.1"/>
    <property type="molecule type" value="Genomic_DNA"/>
</dbReference>
<dbReference type="EMBL" id="AL009126">
    <property type="protein sequence ID" value="CAB13462.1"/>
    <property type="molecule type" value="Genomic_DNA"/>
</dbReference>
<dbReference type="EMBL" id="U59433">
    <property type="protein sequence ID" value="AAC44305.1"/>
    <property type="molecule type" value="Genomic_DNA"/>
</dbReference>
<dbReference type="PIR" id="H69679">
    <property type="entry name" value="H69679"/>
</dbReference>
<dbReference type="PIR" id="T46631">
    <property type="entry name" value="T46631"/>
</dbReference>
<dbReference type="RefSeq" id="NP_389471.1">
    <property type="nucleotide sequence ID" value="NC_000964.3"/>
</dbReference>
<dbReference type="RefSeq" id="WP_003232041.1">
    <property type="nucleotide sequence ID" value="NZ_OZ025638.1"/>
</dbReference>
<dbReference type="PDB" id="1VI1">
    <property type="method" value="X-ray"/>
    <property type="resolution" value="2.95 A"/>
    <property type="chains" value="A/B=2-333"/>
</dbReference>
<dbReference type="PDB" id="6A1K">
    <property type="method" value="X-ray"/>
    <property type="resolution" value="2.30 A"/>
    <property type="chains" value="A/B=1-326"/>
</dbReference>
<dbReference type="PDBsum" id="1VI1"/>
<dbReference type="PDBsum" id="6A1K"/>
<dbReference type="SMR" id="P71018"/>
<dbReference type="FunCoup" id="P71018">
    <property type="interactions" value="396"/>
</dbReference>
<dbReference type="STRING" id="224308.BSU15890"/>
<dbReference type="jPOST" id="P71018"/>
<dbReference type="PaxDb" id="224308-BSU15890"/>
<dbReference type="EnsemblBacteria" id="CAB13462">
    <property type="protein sequence ID" value="CAB13462"/>
    <property type="gene ID" value="BSU_15890"/>
</dbReference>
<dbReference type="GeneID" id="938066"/>
<dbReference type="KEGG" id="bsu:BSU15890"/>
<dbReference type="PATRIC" id="fig|224308.179.peg.1729"/>
<dbReference type="eggNOG" id="COG0416">
    <property type="taxonomic scope" value="Bacteria"/>
</dbReference>
<dbReference type="InParanoid" id="P71018"/>
<dbReference type="OrthoDB" id="9806408at2"/>
<dbReference type="PhylomeDB" id="P71018"/>
<dbReference type="BioCyc" id="BSUB:BSU15890-MONOMER"/>
<dbReference type="BRENDA" id="2.3.1.274">
    <property type="organism ID" value="658"/>
</dbReference>
<dbReference type="UniPathway" id="UPA00085"/>
<dbReference type="EvolutionaryTrace" id="P71018"/>
<dbReference type="Proteomes" id="UP000001570">
    <property type="component" value="Chromosome"/>
</dbReference>
<dbReference type="GO" id="GO:0005737">
    <property type="term" value="C:cytoplasm"/>
    <property type="evidence" value="ECO:0007669"/>
    <property type="project" value="UniProtKB-SubCell"/>
</dbReference>
<dbReference type="GO" id="GO:0043811">
    <property type="term" value="F:phosphate:acyl-[acyl carrier protein] acyltransferase activity"/>
    <property type="evidence" value="ECO:0007669"/>
    <property type="project" value="UniProtKB-UniRule"/>
</dbReference>
<dbReference type="GO" id="GO:0006633">
    <property type="term" value="P:fatty acid biosynthetic process"/>
    <property type="evidence" value="ECO:0007669"/>
    <property type="project" value="UniProtKB-UniRule"/>
</dbReference>
<dbReference type="GO" id="GO:0008654">
    <property type="term" value="P:phospholipid biosynthetic process"/>
    <property type="evidence" value="ECO:0007669"/>
    <property type="project" value="UniProtKB-KW"/>
</dbReference>
<dbReference type="Gene3D" id="3.40.718.10">
    <property type="entry name" value="Isopropylmalate Dehydrogenase"/>
    <property type="match status" value="1"/>
</dbReference>
<dbReference type="HAMAP" id="MF_00019">
    <property type="entry name" value="PlsX"/>
    <property type="match status" value="1"/>
</dbReference>
<dbReference type="InterPro" id="IPR003664">
    <property type="entry name" value="FA_synthesis"/>
</dbReference>
<dbReference type="InterPro" id="IPR012281">
    <property type="entry name" value="Phospholipid_synth_PlsX-like"/>
</dbReference>
<dbReference type="NCBIfam" id="TIGR00182">
    <property type="entry name" value="plsX"/>
    <property type="match status" value="1"/>
</dbReference>
<dbReference type="PANTHER" id="PTHR30100">
    <property type="entry name" value="FATTY ACID/PHOSPHOLIPID SYNTHESIS PROTEIN PLSX"/>
    <property type="match status" value="1"/>
</dbReference>
<dbReference type="PANTHER" id="PTHR30100:SF1">
    <property type="entry name" value="PHOSPHATE ACYLTRANSFERASE"/>
    <property type="match status" value="1"/>
</dbReference>
<dbReference type="Pfam" id="PF02504">
    <property type="entry name" value="FA_synthesis"/>
    <property type="match status" value="1"/>
</dbReference>
<dbReference type="PIRSF" id="PIRSF002465">
    <property type="entry name" value="Phsphlp_syn_PlsX"/>
    <property type="match status" value="1"/>
</dbReference>
<dbReference type="SUPFAM" id="SSF53659">
    <property type="entry name" value="Isocitrate/Isopropylmalate dehydrogenase-like"/>
    <property type="match status" value="1"/>
</dbReference>
<feature type="chain" id="PRO_0000189847" description="Phosphate acyltransferase">
    <location>
        <begin position="1"/>
        <end position="333"/>
    </location>
</feature>
<feature type="sequence conflict" description="In Ref. 3." evidence="6" ref="3">
    <original>DEPVRAVRR</original>
    <variation>MNRSVPCEA</variation>
    <location>
        <begin position="66"/>
        <end position="74"/>
    </location>
</feature>
<feature type="strand" evidence="8">
    <location>
        <begin position="2"/>
        <end position="8"/>
    </location>
</feature>
<feature type="turn" evidence="8">
    <location>
        <begin position="11"/>
        <end position="14"/>
    </location>
</feature>
<feature type="helix" evidence="8">
    <location>
        <begin position="15"/>
        <end position="27"/>
    </location>
</feature>
<feature type="strand" evidence="8">
    <location>
        <begin position="32"/>
        <end position="37"/>
    </location>
</feature>
<feature type="helix" evidence="8">
    <location>
        <begin position="39"/>
        <end position="45"/>
    </location>
</feature>
<feature type="strand" evidence="8">
    <location>
        <begin position="51"/>
        <end position="57"/>
    </location>
</feature>
<feature type="helix" evidence="8">
    <location>
        <begin position="68"/>
        <end position="74"/>
    </location>
</feature>
<feature type="helix" evidence="8">
    <location>
        <begin position="79"/>
        <end position="88"/>
    </location>
</feature>
<feature type="strand" evidence="8">
    <location>
        <begin position="93"/>
        <end position="97"/>
    </location>
</feature>
<feature type="helix" evidence="8">
    <location>
        <begin position="101"/>
        <end position="111"/>
    </location>
</feature>
<feature type="strand" evidence="8">
    <location>
        <begin position="122"/>
        <end position="124"/>
    </location>
</feature>
<feature type="strand" evidence="7">
    <location>
        <begin position="130"/>
        <end position="132"/>
    </location>
</feature>
<feature type="strand" evidence="8">
    <location>
        <begin position="135"/>
        <end position="138"/>
    </location>
</feature>
<feature type="strand" evidence="8">
    <location>
        <begin position="140"/>
        <end position="142"/>
    </location>
</feature>
<feature type="helix" evidence="8">
    <location>
        <begin position="148"/>
        <end position="164"/>
    </location>
</feature>
<feature type="strand" evidence="8">
    <location>
        <begin position="172"/>
        <end position="178"/>
    </location>
</feature>
<feature type="helix" evidence="8">
    <location>
        <begin position="187"/>
        <end position="197"/>
    </location>
</feature>
<feature type="strand" evidence="8">
    <location>
        <begin position="202"/>
        <end position="209"/>
    </location>
</feature>
<feature type="helix" evidence="8">
    <location>
        <begin position="210"/>
        <end position="215"/>
    </location>
</feature>
<feature type="strand" evidence="8">
    <location>
        <begin position="219"/>
        <end position="222"/>
    </location>
</feature>
<feature type="helix" evidence="8">
    <location>
        <begin position="225"/>
        <end position="250"/>
    </location>
</feature>
<feature type="turn" evidence="7">
    <location>
        <begin position="251"/>
        <end position="253"/>
    </location>
</feature>
<feature type="helix" evidence="8">
    <location>
        <begin position="258"/>
        <end position="262"/>
    </location>
</feature>
<feature type="helix" evidence="8">
    <location>
        <begin position="265"/>
        <end position="274"/>
    </location>
</feature>
<feature type="helix" evidence="8">
    <location>
        <begin position="277"/>
        <end position="279"/>
    </location>
</feature>
<feature type="strand" evidence="8">
    <location>
        <begin position="282"/>
        <end position="285"/>
    </location>
</feature>
<feature type="strand" evidence="8">
    <location>
        <begin position="287"/>
        <end position="289"/>
    </location>
</feature>
<feature type="strand" evidence="8">
    <location>
        <begin position="291"/>
        <end position="293"/>
    </location>
</feature>
<feature type="helix" evidence="8">
    <location>
        <begin position="300"/>
        <end position="315"/>
    </location>
</feature>
<feature type="helix" evidence="8">
    <location>
        <begin position="318"/>
        <end position="325"/>
    </location>
</feature>
<feature type="helix" evidence="7">
    <location>
        <begin position="328"/>
        <end position="331"/>
    </location>
</feature>
<evidence type="ECO:0000255" key="1">
    <source>
        <dbReference type="HAMAP-Rule" id="MF_00019"/>
    </source>
</evidence>
<evidence type="ECO:0000269" key="2">
    <source>
    </source>
</evidence>
<evidence type="ECO:0000269" key="3">
    <source>
    </source>
</evidence>
<evidence type="ECO:0000269" key="4">
    <source>
    </source>
</evidence>
<evidence type="ECO:0000269" key="5">
    <source>
    </source>
</evidence>
<evidence type="ECO:0000305" key="6"/>
<evidence type="ECO:0007829" key="7">
    <source>
        <dbReference type="PDB" id="1VI1"/>
    </source>
</evidence>
<evidence type="ECO:0007829" key="8">
    <source>
        <dbReference type="PDB" id="6A1K"/>
    </source>
</evidence>
<proteinExistence type="evidence at protein level"/>
<gene>
    <name evidence="1" type="primary">plsX</name>
    <name type="synonym">ylpD</name>
    <name type="ordered locus">BSU15890</name>
</gene>
<reference key="1">
    <citation type="journal article" date="1998" name="Microbiology">
        <title>A 28 kbp segment from the spoVM region of the Bacillus subtilis 168 genome.</title>
        <authorList>
            <person name="Foulger D."/>
            <person name="Errington J."/>
        </authorList>
    </citation>
    <scope>NUCLEOTIDE SEQUENCE [GENOMIC DNA]</scope>
    <source>
        <strain>168</strain>
    </source>
</reference>
<reference key="2">
    <citation type="journal article" date="1997" name="Nature">
        <title>The complete genome sequence of the Gram-positive bacterium Bacillus subtilis.</title>
        <authorList>
            <person name="Kunst F."/>
            <person name="Ogasawara N."/>
            <person name="Moszer I."/>
            <person name="Albertini A.M."/>
            <person name="Alloni G."/>
            <person name="Azevedo V."/>
            <person name="Bertero M.G."/>
            <person name="Bessieres P."/>
            <person name="Bolotin A."/>
            <person name="Borchert S."/>
            <person name="Borriss R."/>
            <person name="Boursier L."/>
            <person name="Brans A."/>
            <person name="Braun M."/>
            <person name="Brignell S.C."/>
            <person name="Bron S."/>
            <person name="Brouillet S."/>
            <person name="Bruschi C.V."/>
            <person name="Caldwell B."/>
            <person name="Capuano V."/>
            <person name="Carter N.M."/>
            <person name="Choi S.-K."/>
            <person name="Codani J.-J."/>
            <person name="Connerton I.F."/>
            <person name="Cummings N.J."/>
            <person name="Daniel R.A."/>
            <person name="Denizot F."/>
            <person name="Devine K.M."/>
            <person name="Duesterhoeft A."/>
            <person name="Ehrlich S.D."/>
            <person name="Emmerson P.T."/>
            <person name="Entian K.-D."/>
            <person name="Errington J."/>
            <person name="Fabret C."/>
            <person name="Ferrari E."/>
            <person name="Foulger D."/>
            <person name="Fritz C."/>
            <person name="Fujita M."/>
            <person name="Fujita Y."/>
            <person name="Fuma S."/>
            <person name="Galizzi A."/>
            <person name="Galleron N."/>
            <person name="Ghim S.-Y."/>
            <person name="Glaser P."/>
            <person name="Goffeau A."/>
            <person name="Golightly E.J."/>
            <person name="Grandi G."/>
            <person name="Guiseppi G."/>
            <person name="Guy B.J."/>
            <person name="Haga K."/>
            <person name="Haiech J."/>
            <person name="Harwood C.R."/>
            <person name="Henaut A."/>
            <person name="Hilbert H."/>
            <person name="Holsappel S."/>
            <person name="Hosono S."/>
            <person name="Hullo M.-F."/>
            <person name="Itaya M."/>
            <person name="Jones L.-M."/>
            <person name="Joris B."/>
            <person name="Karamata D."/>
            <person name="Kasahara Y."/>
            <person name="Klaerr-Blanchard M."/>
            <person name="Klein C."/>
            <person name="Kobayashi Y."/>
            <person name="Koetter P."/>
            <person name="Koningstein G."/>
            <person name="Krogh S."/>
            <person name="Kumano M."/>
            <person name="Kurita K."/>
            <person name="Lapidus A."/>
            <person name="Lardinois S."/>
            <person name="Lauber J."/>
            <person name="Lazarevic V."/>
            <person name="Lee S.-M."/>
            <person name="Levine A."/>
            <person name="Liu H."/>
            <person name="Masuda S."/>
            <person name="Mauel C."/>
            <person name="Medigue C."/>
            <person name="Medina N."/>
            <person name="Mellado R.P."/>
            <person name="Mizuno M."/>
            <person name="Moestl D."/>
            <person name="Nakai S."/>
            <person name="Noback M."/>
            <person name="Noone D."/>
            <person name="O'Reilly M."/>
            <person name="Ogawa K."/>
            <person name="Ogiwara A."/>
            <person name="Oudega B."/>
            <person name="Park S.-H."/>
            <person name="Parro V."/>
            <person name="Pohl T.M."/>
            <person name="Portetelle D."/>
            <person name="Porwollik S."/>
            <person name="Prescott A.M."/>
            <person name="Presecan E."/>
            <person name="Pujic P."/>
            <person name="Purnelle B."/>
            <person name="Rapoport G."/>
            <person name="Rey M."/>
            <person name="Reynolds S."/>
            <person name="Rieger M."/>
            <person name="Rivolta C."/>
            <person name="Rocha E."/>
            <person name="Roche B."/>
            <person name="Rose M."/>
            <person name="Sadaie Y."/>
            <person name="Sato T."/>
            <person name="Scanlan E."/>
            <person name="Schleich S."/>
            <person name="Schroeter R."/>
            <person name="Scoffone F."/>
            <person name="Sekiguchi J."/>
            <person name="Sekowska A."/>
            <person name="Seror S.J."/>
            <person name="Serror P."/>
            <person name="Shin B.-S."/>
            <person name="Soldo B."/>
            <person name="Sorokin A."/>
            <person name="Tacconi E."/>
            <person name="Takagi T."/>
            <person name="Takahashi H."/>
            <person name="Takemaru K."/>
            <person name="Takeuchi M."/>
            <person name="Tamakoshi A."/>
            <person name="Tanaka T."/>
            <person name="Terpstra P."/>
            <person name="Tognoni A."/>
            <person name="Tosato V."/>
            <person name="Uchiyama S."/>
            <person name="Vandenbol M."/>
            <person name="Vannier F."/>
            <person name="Vassarotti A."/>
            <person name="Viari A."/>
            <person name="Wambutt R."/>
            <person name="Wedler E."/>
            <person name="Wedler H."/>
            <person name="Weitzenegger T."/>
            <person name="Winters P."/>
            <person name="Wipat A."/>
            <person name="Yamamoto H."/>
            <person name="Yamane K."/>
            <person name="Yasumoto K."/>
            <person name="Yata K."/>
            <person name="Yoshida K."/>
            <person name="Yoshikawa H.-F."/>
            <person name="Zumstein E."/>
            <person name="Yoshikawa H."/>
            <person name="Danchin A."/>
        </authorList>
    </citation>
    <scope>NUCLEOTIDE SEQUENCE [LARGE SCALE GENOMIC DNA]</scope>
    <source>
        <strain>168</strain>
    </source>
</reference>
<reference key="3">
    <citation type="journal article" date="1996" name="J. Bacteriol.">
        <title>Bacillus subtilis acyl carrier protein is encoded in a cluster of lipid biosynthesis genes.</title>
        <authorList>
            <person name="Morbidoni H.R."/>
            <person name="de Mendoza D."/>
            <person name="Cronan J.E. Jr."/>
        </authorList>
    </citation>
    <scope>NUCLEOTIDE SEQUENCE [GENOMIC DNA] OF 66-333</scope>
    <source>
        <strain>168</strain>
    </source>
</reference>
<reference key="4">
    <citation type="journal article" date="2007" name="BMC Microbiol.">
        <title>Involvement of the YneS/YgiH and PlsX proteins in phospholipid biosynthesis in both Bacillus subtilis and Escherichia coli.</title>
        <authorList>
            <person name="Yoshimura M."/>
            <person name="Oshima T."/>
            <person name="Ogasawara N."/>
        </authorList>
    </citation>
    <scope>FUNCTION IN PHOSPHOLIPID BIOSYNTHESIS</scope>
    <source>
        <strain>168</strain>
    </source>
</reference>
<reference key="5">
    <citation type="journal article" date="2007" name="J. Bacteriol.">
        <title>Coupling of fatty acid and phospholipid synthesis in Bacillus subtilis.</title>
        <authorList>
            <person name="Paoletti L."/>
            <person name="Lu Y.-J."/>
            <person name="Schujman G.E."/>
            <person name="de Mendoza D."/>
            <person name="Rock C.O."/>
        </authorList>
    </citation>
    <scope>FUNCTION</scope>
</reference>
<reference key="6">
    <citation type="journal article" date="2008" name="Genes Genet. Syst.">
        <title>Involvement of PlsX and the acyl-phosphate dependent sn-glycerol-3-phosphate acyltransferase PlsY in the initial stage of glycerolipid synthesis in Bacillus subtilis.</title>
        <authorList>
            <person name="Hara Y."/>
            <person name="Seki M."/>
            <person name="Matsuoka S."/>
            <person name="Hara H."/>
            <person name="Yamashita A."/>
            <person name="Matsumoto K."/>
        </authorList>
    </citation>
    <scope>INTERACTION</scope>
    <source>
        <strain>168</strain>
    </source>
</reference>
<reference key="7">
    <citation type="journal article" date="2005" name="Proteins">
        <title>Structural analysis of a set of proteins resulting from a bacterial genomics project.</title>
        <authorList>
            <person name="Badger J."/>
            <person name="Sauder J.M."/>
            <person name="Adams J.M."/>
            <person name="Antonysamy S."/>
            <person name="Bain K."/>
            <person name="Bergseid M.G."/>
            <person name="Buchanan S.G."/>
            <person name="Buchanan M.D."/>
            <person name="Batiyenko Y."/>
            <person name="Christopher J.A."/>
            <person name="Emtage S."/>
            <person name="Eroshkina A."/>
            <person name="Feil I."/>
            <person name="Furlong E.B."/>
            <person name="Gajiwala K.S."/>
            <person name="Gao X."/>
            <person name="He D."/>
            <person name="Hendle J."/>
            <person name="Huber A."/>
            <person name="Hoda K."/>
            <person name="Kearins P."/>
            <person name="Kissinger C."/>
            <person name="Laubert B."/>
            <person name="Lewis H.A."/>
            <person name="Lin J."/>
            <person name="Loomis K."/>
            <person name="Lorimer D."/>
            <person name="Louie G."/>
            <person name="Maletic M."/>
            <person name="Marsh C.D."/>
            <person name="Miller I."/>
            <person name="Molinari J."/>
            <person name="Muller-Dieckmann H.J."/>
            <person name="Newman J.M."/>
            <person name="Noland B.W."/>
            <person name="Pagarigan B."/>
            <person name="Park F."/>
            <person name="Peat T.S."/>
            <person name="Post K.W."/>
            <person name="Radojicic S."/>
            <person name="Ramos A."/>
            <person name="Romero R."/>
            <person name="Rutter M.E."/>
            <person name="Sanderson W.E."/>
            <person name="Schwinn K.D."/>
            <person name="Tresser J."/>
            <person name="Winhoven J."/>
            <person name="Wright T.A."/>
            <person name="Wu L."/>
            <person name="Xu J."/>
            <person name="Harris T.J.R."/>
        </authorList>
    </citation>
    <scope>X-RAY CRYSTALLOGRAPHY (2.95 ANGSTROMS) OF 2-333</scope>
    <scope>FUNCTION</scope>
</reference>
<keyword id="KW-0002">3D-structure</keyword>
<keyword id="KW-0963">Cytoplasm</keyword>
<keyword id="KW-0444">Lipid biosynthesis</keyword>
<keyword id="KW-0443">Lipid metabolism</keyword>
<keyword id="KW-0594">Phospholipid biosynthesis</keyword>
<keyword id="KW-1208">Phospholipid metabolism</keyword>
<keyword id="KW-1185">Reference proteome</keyword>
<keyword id="KW-0808">Transferase</keyword>
<sequence>MRIAVDAMGGDHAPKAVIDGVIKGIEAFDDLHITLVGDKTTIESHLTTTSDRITVLHADEVIEPTDEPVRAVRRKKNSSMVLMAQEVAENRADACISAGNTGALMTAGLFIVGRIKGIDRPALAPTLPTVSGDGFLLLDVGANVDAKPEHLVQYAIMGSVYSQQVRGVTSPRVGLLNVGTEDKKGNELTKQTFQILKETANINFIGNVEARDLLDDVADVVVTDGFTGNVTLKTLEGSALSIFKMMRDVMTSTLTSKLAAAVLKPKLKEMKMKMEYSNYGGASLFGLKAPVIKAHGSSDSNAVFHAIRQAREMVSQNVAALIQEEVKEEKTDE</sequence>